<proteinExistence type="inferred from homology"/>
<dbReference type="EC" id="2.7.7.3" evidence="1"/>
<dbReference type="EMBL" id="AE005672">
    <property type="protein sequence ID" value="AAK76035.1"/>
    <property type="molecule type" value="Genomic_DNA"/>
</dbReference>
<dbReference type="PIR" id="B95230">
    <property type="entry name" value="B95230"/>
</dbReference>
<dbReference type="RefSeq" id="WP_001280753.1">
    <property type="nucleotide sequence ID" value="NZ_CP155539.1"/>
</dbReference>
<dbReference type="SMR" id="Q97NQ2"/>
<dbReference type="PaxDb" id="170187-SP_1968"/>
<dbReference type="EnsemblBacteria" id="AAK76035">
    <property type="protein sequence ID" value="AAK76035"/>
    <property type="gene ID" value="SP_1968"/>
</dbReference>
<dbReference type="KEGG" id="spn:SP_1968"/>
<dbReference type="eggNOG" id="COG0669">
    <property type="taxonomic scope" value="Bacteria"/>
</dbReference>
<dbReference type="PhylomeDB" id="Q97NQ2"/>
<dbReference type="BioCyc" id="SPNE170187:G1FZB-2023-MONOMER"/>
<dbReference type="UniPathway" id="UPA00241">
    <property type="reaction ID" value="UER00355"/>
</dbReference>
<dbReference type="Proteomes" id="UP000000585">
    <property type="component" value="Chromosome"/>
</dbReference>
<dbReference type="GO" id="GO:0005737">
    <property type="term" value="C:cytoplasm"/>
    <property type="evidence" value="ECO:0007669"/>
    <property type="project" value="UniProtKB-SubCell"/>
</dbReference>
<dbReference type="GO" id="GO:0005524">
    <property type="term" value="F:ATP binding"/>
    <property type="evidence" value="ECO:0007669"/>
    <property type="project" value="UniProtKB-KW"/>
</dbReference>
<dbReference type="GO" id="GO:0004595">
    <property type="term" value="F:pantetheine-phosphate adenylyltransferase activity"/>
    <property type="evidence" value="ECO:0007669"/>
    <property type="project" value="UniProtKB-UniRule"/>
</dbReference>
<dbReference type="GO" id="GO:0015937">
    <property type="term" value="P:coenzyme A biosynthetic process"/>
    <property type="evidence" value="ECO:0007669"/>
    <property type="project" value="UniProtKB-UniRule"/>
</dbReference>
<dbReference type="CDD" id="cd02163">
    <property type="entry name" value="PPAT"/>
    <property type="match status" value="1"/>
</dbReference>
<dbReference type="Gene3D" id="3.40.50.620">
    <property type="entry name" value="HUPs"/>
    <property type="match status" value="1"/>
</dbReference>
<dbReference type="HAMAP" id="MF_00151">
    <property type="entry name" value="PPAT_bact"/>
    <property type="match status" value="1"/>
</dbReference>
<dbReference type="InterPro" id="IPR004821">
    <property type="entry name" value="Cyt_trans-like"/>
</dbReference>
<dbReference type="InterPro" id="IPR001980">
    <property type="entry name" value="PPAT"/>
</dbReference>
<dbReference type="InterPro" id="IPR014729">
    <property type="entry name" value="Rossmann-like_a/b/a_fold"/>
</dbReference>
<dbReference type="NCBIfam" id="TIGR01510">
    <property type="entry name" value="coaD_prev_kdtB"/>
    <property type="match status" value="1"/>
</dbReference>
<dbReference type="NCBIfam" id="TIGR00125">
    <property type="entry name" value="cyt_tran_rel"/>
    <property type="match status" value="1"/>
</dbReference>
<dbReference type="PANTHER" id="PTHR21342">
    <property type="entry name" value="PHOSPHOPANTETHEINE ADENYLYLTRANSFERASE"/>
    <property type="match status" value="1"/>
</dbReference>
<dbReference type="PANTHER" id="PTHR21342:SF1">
    <property type="entry name" value="PHOSPHOPANTETHEINE ADENYLYLTRANSFERASE"/>
    <property type="match status" value="1"/>
</dbReference>
<dbReference type="Pfam" id="PF01467">
    <property type="entry name" value="CTP_transf_like"/>
    <property type="match status" value="1"/>
</dbReference>
<dbReference type="PRINTS" id="PR01020">
    <property type="entry name" value="LPSBIOSNTHSS"/>
</dbReference>
<dbReference type="SUPFAM" id="SSF52374">
    <property type="entry name" value="Nucleotidylyl transferase"/>
    <property type="match status" value="1"/>
</dbReference>
<evidence type="ECO:0000255" key="1">
    <source>
        <dbReference type="HAMAP-Rule" id="MF_00151"/>
    </source>
</evidence>
<accession>Q97NQ2</accession>
<protein>
    <recommendedName>
        <fullName evidence="1">Phosphopantetheine adenylyltransferase</fullName>
        <ecNumber evidence="1">2.7.7.3</ecNumber>
    </recommendedName>
    <alternativeName>
        <fullName evidence="1">Dephospho-CoA pyrophosphorylase</fullName>
    </alternativeName>
    <alternativeName>
        <fullName evidence="1">Pantetheine-phosphate adenylyltransferase</fullName>
        <shortName evidence="1">PPAT</shortName>
    </alternativeName>
</protein>
<reference key="1">
    <citation type="journal article" date="2001" name="Science">
        <title>Complete genome sequence of a virulent isolate of Streptococcus pneumoniae.</title>
        <authorList>
            <person name="Tettelin H."/>
            <person name="Nelson K.E."/>
            <person name="Paulsen I.T."/>
            <person name="Eisen J.A."/>
            <person name="Read T.D."/>
            <person name="Peterson S.N."/>
            <person name="Heidelberg J.F."/>
            <person name="DeBoy R.T."/>
            <person name="Haft D.H."/>
            <person name="Dodson R.J."/>
            <person name="Durkin A.S."/>
            <person name="Gwinn M.L."/>
            <person name="Kolonay J.F."/>
            <person name="Nelson W.C."/>
            <person name="Peterson J.D."/>
            <person name="Umayam L.A."/>
            <person name="White O."/>
            <person name="Salzberg S.L."/>
            <person name="Lewis M.R."/>
            <person name="Radune D."/>
            <person name="Holtzapple E.K."/>
            <person name="Khouri H.M."/>
            <person name="Wolf A.M."/>
            <person name="Utterback T.R."/>
            <person name="Hansen C.L."/>
            <person name="McDonald L.A."/>
            <person name="Feldblyum T.V."/>
            <person name="Angiuoli S.V."/>
            <person name="Dickinson T."/>
            <person name="Hickey E.K."/>
            <person name="Holt I.E."/>
            <person name="Loftus B.J."/>
            <person name="Yang F."/>
            <person name="Smith H.O."/>
            <person name="Venter J.C."/>
            <person name="Dougherty B.A."/>
            <person name="Morrison D.A."/>
            <person name="Hollingshead S.K."/>
            <person name="Fraser C.M."/>
        </authorList>
    </citation>
    <scope>NUCLEOTIDE SEQUENCE [LARGE SCALE GENOMIC DNA]</scope>
    <source>
        <strain>ATCC BAA-334 / TIGR4</strain>
    </source>
</reference>
<feature type="chain" id="PRO_0000156284" description="Phosphopantetheine adenylyltransferase">
    <location>
        <begin position="1"/>
        <end position="162"/>
    </location>
</feature>
<feature type="binding site" evidence="1">
    <location>
        <begin position="11"/>
        <end position="12"/>
    </location>
    <ligand>
        <name>ATP</name>
        <dbReference type="ChEBI" id="CHEBI:30616"/>
    </ligand>
</feature>
<feature type="binding site" evidence="1">
    <location>
        <position position="11"/>
    </location>
    <ligand>
        <name>substrate</name>
    </ligand>
</feature>
<feature type="binding site" evidence="1">
    <location>
        <position position="19"/>
    </location>
    <ligand>
        <name>ATP</name>
        <dbReference type="ChEBI" id="CHEBI:30616"/>
    </ligand>
</feature>
<feature type="binding site" evidence="1">
    <location>
        <position position="43"/>
    </location>
    <ligand>
        <name>substrate</name>
    </ligand>
</feature>
<feature type="binding site" evidence="1">
    <location>
        <position position="76"/>
    </location>
    <ligand>
        <name>substrate</name>
    </ligand>
</feature>
<feature type="binding site" evidence="1">
    <location>
        <position position="90"/>
    </location>
    <ligand>
        <name>substrate</name>
    </ligand>
</feature>
<feature type="binding site" evidence="1">
    <location>
        <begin position="91"/>
        <end position="93"/>
    </location>
    <ligand>
        <name>ATP</name>
        <dbReference type="ChEBI" id="CHEBI:30616"/>
    </ligand>
</feature>
<feature type="binding site" evidence="1">
    <location>
        <position position="101"/>
    </location>
    <ligand>
        <name>ATP</name>
        <dbReference type="ChEBI" id="CHEBI:30616"/>
    </ligand>
</feature>
<feature type="binding site" evidence="1">
    <location>
        <begin position="126"/>
        <end position="132"/>
    </location>
    <ligand>
        <name>ATP</name>
        <dbReference type="ChEBI" id="CHEBI:30616"/>
    </ligand>
</feature>
<feature type="site" description="Transition state stabilizer" evidence="1">
    <location>
        <position position="19"/>
    </location>
</feature>
<keyword id="KW-0067">ATP-binding</keyword>
<keyword id="KW-0173">Coenzyme A biosynthesis</keyword>
<keyword id="KW-0963">Cytoplasm</keyword>
<keyword id="KW-0460">Magnesium</keyword>
<keyword id="KW-0547">Nucleotide-binding</keyword>
<keyword id="KW-0548">Nucleotidyltransferase</keyword>
<keyword id="KW-1185">Reference proteome</keyword>
<keyword id="KW-0808">Transferase</keyword>
<sequence length="162" mass="18470">MSDKIGLFTGSFDPMTNGHLDIIERASRLFDKLYVGIFFNPHKQGFLPLENRKRGLEKAVKHLGNVKVVSSHDKLVVDVAKRLGATCLVRGLRNASDLQYEASFDYYNHQLSSDIETIYLHSRPEHLYISSSGVRELLKFGQDIACYVPESILEEIRNEKKD</sequence>
<organism>
    <name type="scientific">Streptococcus pneumoniae serotype 4 (strain ATCC BAA-334 / TIGR4)</name>
    <dbReference type="NCBI Taxonomy" id="170187"/>
    <lineage>
        <taxon>Bacteria</taxon>
        <taxon>Bacillati</taxon>
        <taxon>Bacillota</taxon>
        <taxon>Bacilli</taxon>
        <taxon>Lactobacillales</taxon>
        <taxon>Streptococcaceae</taxon>
        <taxon>Streptococcus</taxon>
    </lineage>
</organism>
<comment type="function">
    <text evidence="1">Reversibly transfers an adenylyl group from ATP to 4'-phosphopantetheine, yielding dephospho-CoA (dPCoA) and pyrophosphate.</text>
</comment>
<comment type="catalytic activity">
    <reaction evidence="1">
        <text>(R)-4'-phosphopantetheine + ATP + H(+) = 3'-dephospho-CoA + diphosphate</text>
        <dbReference type="Rhea" id="RHEA:19801"/>
        <dbReference type="ChEBI" id="CHEBI:15378"/>
        <dbReference type="ChEBI" id="CHEBI:30616"/>
        <dbReference type="ChEBI" id="CHEBI:33019"/>
        <dbReference type="ChEBI" id="CHEBI:57328"/>
        <dbReference type="ChEBI" id="CHEBI:61723"/>
        <dbReference type="EC" id="2.7.7.3"/>
    </reaction>
</comment>
<comment type="cofactor">
    <cofactor evidence="1">
        <name>Mg(2+)</name>
        <dbReference type="ChEBI" id="CHEBI:18420"/>
    </cofactor>
</comment>
<comment type="pathway">
    <text evidence="1">Cofactor biosynthesis; coenzyme A biosynthesis; CoA from (R)-pantothenate: step 4/5.</text>
</comment>
<comment type="subunit">
    <text evidence="1">Homohexamer.</text>
</comment>
<comment type="subcellular location">
    <subcellularLocation>
        <location evidence="1">Cytoplasm</location>
    </subcellularLocation>
</comment>
<comment type="similarity">
    <text evidence="1">Belongs to the bacterial CoaD family.</text>
</comment>
<gene>
    <name evidence="1" type="primary">coaD</name>
    <name type="ordered locus">SP_1968</name>
</gene>
<name>COAD_STRPN</name>